<organism>
    <name type="scientific">Escherichia coli O157:H7 (strain EC4115 / EHEC)</name>
    <dbReference type="NCBI Taxonomy" id="444450"/>
    <lineage>
        <taxon>Bacteria</taxon>
        <taxon>Pseudomonadati</taxon>
        <taxon>Pseudomonadota</taxon>
        <taxon>Gammaproteobacteria</taxon>
        <taxon>Enterobacterales</taxon>
        <taxon>Enterobacteriaceae</taxon>
        <taxon>Escherichia</taxon>
    </lineage>
</organism>
<proteinExistence type="inferred from homology"/>
<feature type="chain" id="PRO_1000126614" description="Large ribosomal subunit protein bL31">
    <location>
        <begin position="1"/>
        <end position="70"/>
    </location>
</feature>
<feature type="binding site" evidence="1">
    <location>
        <position position="16"/>
    </location>
    <ligand>
        <name>Zn(2+)</name>
        <dbReference type="ChEBI" id="CHEBI:29105"/>
    </ligand>
</feature>
<feature type="binding site" evidence="1">
    <location>
        <position position="18"/>
    </location>
    <ligand>
        <name>Zn(2+)</name>
        <dbReference type="ChEBI" id="CHEBI:29105"/>
    </ligand>
</feature>
<feature type="binding site" evidence="1">
    <location>
        <position position="37"/>
    </location>
    <ligand>
        <name>Zn(2+)</name>
        <dbReference type="ChEBI" id="CHEBI:29105"/>
    </ligand>
</feature>
<feature type="binding site" evidence="1">
    <location>
        <position position="40"/>
    </location>
    <ligand>
        <name>Zn(2+)</name>
        <dbReference type="ChEBI" id="CHEBI:29105"/>
    </ligand>
</feature>
<feature type="modified residue" description="N6-acetyllysine" evidence="1">
    <location>
        <position position="8"/>
    </location>
</feature>
<accession>B5YZ77</accession>
<reference key="1">
    <citation type="journal article" date="2011" name="Proc. Natl. Acad. Sci. U.S.A.">
        <title>Genomic anatomy of Escherichia coli O157:H7 outbreaks.</title>
        <authorList>
            <person name="Eppinger M."/>
            <person name="Mammel M.K."/>
            <person name="Leclerc J.E."/>
            <person name="Ravel J."/>
            <person name="Cebula T.A."/>
        </authorList>
    </citation>
    <scope>NUCLEOTIDE SEQUENCE [LARGE SCALE GENOMIC DNA]</scope>
    <source>
        <strain>EC4115 / EHEC</strain>
    </source>
</reference>
<evidence type="ECO:0000255" key="1">
    <source>
        <dbReference type="HAMAP-Rule" id="MF_00501"/>
    </source>
</evidence>
<evidence type="ECO:0000305" key="2"/>
<keyword id="KW-0007">Acetylation</keyword>
<keyword id="KW-0479">Metal-binding</keyword>
<keyword id="KW-0687">Ribonucleoprotein</keyword>
<keyword id="KW-0689">Ribosomal protein</keyword>
<keyword id="KW-0694">RNA-binding</keyword>
<keyword id="KW-0699">rRNA-binding</keyword>
<keyword id="KW-0862">Zinc</keyword>
<comment type="function">
    <text evidence="1">Binds the 23S rRNA.</text>
</comment>
<comment type="cofactor">
    <cofactor evidence="1">
        <name>Zn(2+)</name>
        <dbReference type="ChEBI" id="CHEBI:29105"/>
    </cofactor>
    <text evidence="1">Binds 1 zinc ion per subunit.</text>
</comment>
<comment type="subunit">
    <text evidence="1">Part of the 50S ribosomal subunit.</text>
</comment>
<comment type="similarity">
    <text evidence="1">Belongs to the bacterial ribosomal protein bL31 family. Type A subfamily.</text>
</comment>
<sequence length="70" mass="7871">MKKDIHPKYEEITASCSCGNVMKIRSTVGHDLNLDVCSKCHPFFTGKQRDVATGGRVDRFNKRFNIPGSK</sequence>
<protein>
    <recommendedName>
        <fullName evidence="1">Large ribosomal subunit protein bL31</fullName>
    </recommendedName>
    <alternativeName>
        <fullName evidence="2">50S ribosomal protein L31</fullName>
    </alternativeName>
</protein>
<gene>
    <name evidence="1" type="primary">rpmE</name>
    <name type="ordered locus">ECH74115_5394</name>
</gene>
<dbReference type="EMBL" id="CP001164">
    <property type="protein sequence ID" value="ACI38441.1"/>
    <property type="molecule type" value="Genomic_DNA"/>
</dbReference>
<dbReference type="RefSeq" id="WP_000710769.1">
    <property type="nucleotide sequence ID" value="NC_011353.1"/>
</dbReference>
<dbReference type="SMR" id="B5YZ77"/>
<dbReference type="GeneID" id="93777962"/>
<dbReference type="KEGG" id="ecf:ECH74115_5394"/>
<dbReference type="HOGENOM" id="CLU_114306_4_3_6"/>
<dbReference type="GO" id="GO:1990904">
    <property type="term" value="C:ribonucleoprotein complex"/>
    <property type="evidence" value="ECO:0007669"/>
    <property type="project" value="UniProtKB-KW"/>
</dbReference>
<dbReference type="GO" id="GO:0005840">
    <property type="term" value="C:ribosome"/>
    <property type="evidence" value="ECO:0007669"/>
    <property type="project" value="UniProtKB-KW"/>
</dbReference>
<dbReference type="GO" id="GO:0046872">
    <property type="term" value="F:metal ion binding"/>
    <property type="evidence" value="ECO:0007669"/>
    <property type="project" value="UniProtKB-KW"/>
</dbReference>
<dbReference type="GO" id="GO:0019843">
    <property type="term" value="F:rRNA binding"/>
    <property type="evidence" value="ECO:0007669"/>
    <property type="project" value="UniProtKB-KW"/>
</dbReference>
<dbReference type="GO" id="GO:0003735">
    <property type="term" value="F:structural constituent of ribosome"/>
    <property type="evidence" value="ECO:0007669"/>
    <property type="project" value="InterPro"/>
</dbReference>
<dbReference type="GO" id="GO:0006412">
    <property type="term" value="P:translation"/>
    <property type="evidence" value="ECO:0007669"/>
    <property type="project" value="UniProtKB-UniRule"/>
</dbReference>
<dbReference type="FunFam" id="4.10.830.30:FF:000001">
    <property type="entry name" value="50S ribosomal protein L31"/>
    <property type="match status" value="1"/>
</dbReference>
<dbReference type="Gene3D" id="4.10.830.30">
    <property type="entry name" value="Ribosomal protein L31"/>
    <property type="match status" value="1"/>
</dbReference>
<dbReference type="HAMAP" id="MF_00501">
    <property type="entry name" value="Ribosomal_bL31_1"/>
    <property type="match status" value="1"/>
</dbReference>
<dbReference type="InterPro" id="IPR034704">
    <property type="entry name" value="Ribosomal_bL28/bL31-like_sf"/>
</dbReference>
<dbReference type="InterPro" id="IPR002150">
    <property type="entry name" value="Ribosomal_bL31"/>
</dbReference>
<dbReference type="InterPro" id="IPR027491">
    <property type="entry name" value="Ribosomal_bL31_A"/>
</dbReference>
<dbReference type="InterPro" id="IPR042105">
    <property type="entry name" value="Ribosomal_bL31_sf"/>
</dbReference>
<dbReference type="NCBIfam" id="TIGR00105">
    <property type="entry name" value="L31"/>
    <property type="match status" value="1"/>
</dbReference>
<dbReference type="NCBIfam" id="NF000612">
    <property type="entry name" value="PRK00019.1"/>
    <property type="match status" value="1"/>
</dbReference>
<dbReference type="NCBIfam" id="NF001809">
    <property type="entry name" value="PRK00528.1"/>
    <property type="match status" value="1"/>
</dbReference>
<dbReference type="PANTHER" id="PTHR33280">
    <property type="entry name" value="50S RIBOSOMAL PROTEIN L31, CHLOROPLASTIC"/>
    <property type="match status" value="1"/>
</dbReference>
<dbReference type="PANTHER" id="PTHR33280:SF6">
    <property type="entry name" value="LARGE RIBOSOMAL SUBUNIT PROTEIN BL31A"/>
    <property type="match status" value="1"/>
</dbReference>
<dbReference type="Pfam" id="PF01197">
    <property type="entry name" value="Ribosomal_L31"/>
    <property type="match status" value="1"/>
</dbReference>
<dbReference type="PRINTS" id="PR01249">
    <property type="entry name" value="RIBOSOMALL31"/>
</dbReference>
<dbReference type="SUPFAM" id="SSF143800">
    <property type="entry name" value="L28p-like"/>
    <property type="match status" value="1"/>
</dbReference>
<dbReference type="PROSITE" id="PS01143">
    <property type="entry name" value="RIBOSOMAL_L31"/>
    <property type="match status" value="1"/>
</dbReference>
<name>RL31_ECO5E</name>